<accession>B7M4H5</accession>
<gene>
    <name evidence="1" type="primary">ibpB</name>
    <name type="ordered locus">ECIAI1_3864</name>
</gene>
<keyword id="KW-0143">Chaperone</keyword>
<keyword id="KW-0963">Cytoplasm</keyword>
<keyword id="KW-0346">Stress response</keyword>
<reference key="1">
    <citation type="journal article" date="2009" name="PLoS Genet.">
        <title>Organised genome dynamics in the Escherichia coli species results in highly diverse adaptive paths.</title>
        <authorList>
            <person name="Touchon M."/>
            <person name="Hoede C."/>
            <person name="Tenaillon O."/>
            <person name="Barbe V."/>
            <person name="Baeriswyl S."/>
            <person name="Bidet P."/>
            <person name="Bingen E."/>
            <person name="Bonacorsi S."/>
            <person name="Bouchier C."/>
            <person name="Bouvet O."/>
            <person name="Calteau A."/>
            <person name="Chiapello H."/>
            <person name="Clermont O."/>
            <person name="Cruveiller S."/>
            <person name="Danchin A."/>
            <person name="Diard M."/>
            <person name="Dossat C."/>
            <person name="Karoui M.E."/>
            <person name="Frapy E."/>
            <person name="Garry L."/>
            <person name="Ghigo J.M."/>
            <person name="Gilles A.M."/>
            <person name="Johnson J."/>
            <person name="Le Bouguenec C."/>
            <person name="Lescat M."/>
            <person name="Mangenot S."/>
            <person name="Martinez-Jehanne V."/>
            <person name="Matic I."/>
            <person name="Nassif X."/>
            <person name="Oztas S."/>
            <person name="Petit M.A."/>
            <person name="Pichon C."/>
            <person name="Rouy Z."/>
            <person name="Ruf C.S."/>
            <person name="Schneider D."/>
            <person name="Tourret J."/>
            <person name="Vacherie B."/>
            <person name="Vallenet D."/>
            <person name="Medigue C."/>
            <person name="Rocha E.P.C."/>
            <person name="Denamur E."/>
        </authorList>
    </citation>
    <scope>NUCLEOTIDE SEQUENCE [LARGE SCALE GENOMIC DNA]</scope>
    <source>
        <strain>IAI1</strain>
    </source>
</reference>
<proteinExistence type="inferred from homology"/>
<sequence>MRNFDLSPLMRQWIGFDKLANALQNAGESQSFPPYNIEKSDDNHYRITLALAGFRQEDLEIQLEGTRLSVKGTPEQPKEEKKWLHQGLMNQPFSLSFTLAENMEVSGATFVNGLLHIDLIRNEPEPIAAQRIAISERPALNS</sequence>
<dbReference type="EMBL" id="CU928160">
    <property type="protein sequence ID" value="CAR00659.1"/>
    <property type="molecule type" value="Genomic_DNA"/>
</dbReference>
<dbReference type="RefSeq" id="WP_001243431.1">
    <property type="nucleotide sequence ID" value="NC_011741.1"/>
</dbReference>
<dbReference type="SMR" id="B7M4H5"/>
<dbReference type="GeneID" id="93778427"/>
<dbReference type="KEGG" id="ecr:ECIAI1_3864"/>
<dbReference type="HOGENOM" id="CLU_046737_4_2_6"/>
<dbReference type="GO" id="GO:0005737">
    <property type="term" value="C:cytoplasm"/>
    <property type="evidence" value="ECO:0007669"/>
    <property type="project" value="UniProtKB-SubCell"/>
</dbReference>
<dbReference type="GO" id="GO:0050821">
    <property type="term" value="P:protein stabilization"/>
    <property type="evidence" value="ECO:0007669"/>
    <property type="project" value="UniProtKB-UniRule"/>
</dbReference>
<dbReference type="CDD" id="cd06470">
    <property type="entry name" value="ACD_IbpA-B_like"/>
    <property type="match status" value="1"/>
</dbReference>
<dbReference type="FunFam" id="2.60.40.790:FF:000005">
    <property type="entry name" value="Small heat shock protein IbpB"/>
    <property type="match status" value="1"/>
</dbReference>
<dbReference type="Gene3D" id="2.60.40.790">
    <property type="match status" value="1"/>
</dbReference>
<dbReference type="HAMAP" id="MF_02001">
    <property type="entry name" value="HSP20_IbpB"/>
    <property type="match status" value="1"/>
</dbReference>
<dbReference type="InterPro" id="IPR002068">
    <property type="entry name" value="A-crystallin/Hsp20_dom"/>
</dbReference>
<dbReference type="InterPro" id="IPR037913">
    <property type="entry name" value="ACD_IbpA/B"/>
</dbReference>
<dbReference type="InterPro" id="IPR008978">
    <property type="entry name" value="HSP20-like_chaperone"/>
</dbReference>
<dbReference type="InterPro" id="IPR022848">
    <property type="entry name" value="HSP20_IbpB"/>
</dbReference>
<dbReference type="NCBIfam" id="NF008618">
    <property type="entry name" value="PRK11597.1"/>
    <property type="match status" value="1"/>
</dbReference>
<dbReference type="PANTHER" id="PTHR47062">
    <property type="match status" value="1"/>
</dbReference>
<dbReference type="PANTHER" id="PTHR47062:SF2">
    <property type="entry name" value="SMALL HEAT SHOCK PROTEIN IBPB"/>
    <property type="match status" value="1"/>
</dbReference>
<dbReference type="Pfam" id="PF00011">
    <property type="entry name" value="HSP20"/>
    <property type="match status" value="1"/>
</dbReference>
<dbReference type="SUPFAM" id="SSF49764">
    <property type="entry name" value="HSP20-like chaperones"/>
    <property type="match status" value="1"/>
</dbReference>
<dbReference type="PROSITE" id="PS01031">
    <property type="entry name" value="SHSP"/>
    <property type="match status" value="1"/>
</dbReference>
<evidence type="ECO:0000255" key="1">
    <source>
        <dbReference type="HAMAP-Rule" id="MF_02001"/>
    </source>
</evidence>
<evidence type="ECO:0000255" key="2">
    <source>
        <dbReference type="PROSITE-ProRule" id="PRU00285"/>
    </source>
</evidence>
<feature type="chain" id="PRO_1000189101" description="Small heat shock protein IbpB">
    <location>
        <begin position="1"/>
        <end position="142"/>
    </location>
</feature>
<feature type="domain" description="sHSP" evidence="2">
    <location>
        <begin position="26"/>
        <end position="137"/>
    </location>
</feature>
<comment type="function">
    <text evidence="1">Associates with aggregated proteins, together with IbpA, to stabilize and protect them from irreversible denaturation and extensive proteolysis during heat shock and oxidative stress. Aggregated proteins bound to the IbpAB complex are more efficiently refolded and reactivated by the ATP-dependent chaperone systems ClpB and DnaK/DnaJ/GrpE. Its activity is ATP-independent.</text>
</comment>
<comment type="subunit">
    <text evidence="1">Homodimer. Forms homomultimers of about 100-150 subunits at optimal growth temperatures. Conformation changes to oligomers at high temperatures or high ionic concentrations. The decrease in size of the multimers is accompanied by an increase in chaperone activity.</text>
</comment>
<comment type="subcellular location">
    <subcellularLocation>
        <location evidence="1">Cytoplasm</location>
    </subcellularLocation>
</comment>
<comment type="domain">
    <text evidence="1">The N- and C-terminal flexible termini are involved in oligomerization and in the binding of non-native substrate proteins, and are essential for chaperone activity.</text>
</comment>
<comment type="similarity">
    <text evidence="1 2">Belongs to the small heat shock protein (HSP20) family.</text>
</comment>
<name>IBPB_ECO8A</name>
<organism>
    <name type="scientific">Escherichia coli O8 (strain IAI1)</name>
    <dbReference type="NCBI Taxonomy" id="585034"/>
    <lineage>
        <taxon>Bacteria</taxon>
        <taxon>Pseudomonadati</taxon>
        <taxon>Pseudomonadota</taxon>
        <taxon>Gammaproteobacteria</taxon>
        <taxon>Enterobacterales</taxon>
        <taxon>Enterobacteriaceae</taxon>
        <taxon>Escherichia</taxon>
    </lineage>
</organism>
<protein>
    <recommendedName>
        <fullName evidence="1">Small heat shock protein IbpB</fullName>
    </recommendedName>
    <alternativeName>
        <fullName evidence="1">16 kDa heat shock protein B</fullName>
    </alternativeName>
</protein>